<proteinExistence type="evidence at protein level"/>
<organism>
    <name type="scientific">Homo sapiens</name>
    <name type="common">Human</name>
    <dbReference type="NCBI Taxonomy" id="9606"/>
    <lineage>
        <taxon>Eukaryota</taxon>
        <taxon>Metazoa</taxon>
        <taxon>Chordata</taxon>
        <taxon>Craniata</taxon>
        <taxon>Vertebrata</taxon>
        <taxon>Euteleostomi</taxon>
        <taxon>Mammalia</taxon>
        <taxon>Eutheria</taxon>
        <taxon>Euarchontoglires</taxon>
        <taxon>Primates</taxon>
        <taxon>Haplorrhini</taxon>
        <taxon>Catarrhini</taxon>
        <taxon>Hominidae</taxon>
        <taxon>Homo</taxon>
    </lineage>
</organism>
<sequence>MASAGGEDCESPAPEADRPHQRPFLIGVSGGTASGKSTVCEKIMELLGQNEVEQRQRKVVILSQDRFYKVLTAEQKAKALKGQYNFDHPDAFDNDLMHRTLKNIVEGKTVEVPTYDFVTHSRLPETTVVYPADVVLFEGILVFYSQEIRDMFHLRLFVDTDSDVRLSRRVLRDVRRGRDLEQILTQYTTFVKPAFEEFCLPTKKYADVIIPRGVDNMVAINLIVQHIQDILNGDICKWHRGGSNGRSYKRTFSEPGDHPGMLTSGKRSHLESSSRPH</sequence>
<gene>
    <name type="primary">UCK1</name>
    <name type="synonym">URK1</name>
</gene>
<keyword id="KW-0002">3D-structure</keyword>
<keyword id="KW-0025">Alternative splicing</keyword>
<keyword id="KW-0067">ATP-binding</keyword>
<keyword id="KW-0418">Kinase</keyword>
<keyword id="KW-0547">Nucleotide-binding</keyword>
<keyword id="KW-0597">Phosphoprotein</keyword>
<keyword id="KW-1267">Proteomics identification</keyword>
<keyword id="KW-1185">Reference proteome</keyword>
<keyword id="KW-0808">Transferase</keyword>
<evidence type="ECO:0000250" key="1">
    <source>
        <dbReference type="UniProtKB" id="B2BW43"/>
    </source>
</evidence>
<evidence type="ECO:0000250" key="2">
    <source>
        <dbReference type="UniProtKB" id="Q9BZX2"/>
    </source>
</evidence>
<evidence type="ECO:0000256" key="3">
    <source>
        <dbReference type="SAM" id="MobiDB-lite"/>
    </source>
</evidence>
<evidence type="ECO:0000269" key="4">
    <source>
    </source>
</evidence>
<evidence type="ECO:0000269" key="5">
    <source ref="12"/>
</evidence>
<evidence type="ECO:0000303" key="6">
    <source>
    </source>
</evidence>
<evidence type="ECO:0000303" key="7">
    <source>
    </source>
</evidence>
<evidence type="ECO:0000305" key="8"/>
<evidence type="ECO:0007744" key="9">
    <source>
    </source>
</evidence>
<evidence type="ECO:0007744" key="10">
    <source>
    </source>
</evidence>
<evidence type="ECO:0007829" key="11">
    <source>
        <dbReference type="PDB" id="2JEO"/>
    </source>
</evidence>
<protein>
    <recommendedName>
        <fullName>Uridine-cytidine kinase 1</fullName>
        <shortName>UCK 1</shortName>
        <ecNumber evidence="4">2.7.1.48</ecNumber>
    </recommendedName>
    <alternativeName>
        <fullName>Cytidine monophosphokinase 1</fullName>
    </alternativeName>
    <alternativeName>
        <fullName>Uridine monophosphokinase 1</fullName>
    </alternativeName>
</protein>
<name>UCK1_HUMAN</name>
<reference key="1">
    <citation type="journal article" date="2001" name="Mol. Pharmacol.">
        <title>Phosphorylation of uridine and cytidine nucleoside analogs by two human uridine-cytidine kinases.</title>
        <authorList>
            <person name="Van Rompay A.R."/>
            <person name="Norda A."/>
            <person name="Linden K."/>
            <person name="Johansson M."/>
            <person name="Karlsson A."/>
        </authorList>
    </citation>
    <scope>NUCLEOTIDE SEQUENCE [MRNA] (ISOFORM 1)</scope>
    <scope>FUNCTION</scope>
    <scope>CATALYTIC ACTIVITY</scope>
    <scope>PATHWAY</scope>
</reference>
<reference key="2">
    <citation type="submission" date="2000-04" db="EMBL/GenBank/DDBJ databases">
        <title>Human uridine kinase from prostate cancer cell line (LNCaP).</title>
        <authorList>
            <person name="Ho Y.S."/>
            <person name="Johnson R.K."/>
        </authorList>
    </citation>
    <scope>NUCLEOTIDE SEQUENCE [MRNA] (ISOFORM 1)</scope>
</reference>
<reference key="3">
    <citation type="submission" date="2002-02" db="EMBL/GenBank/DDBJ databases">
        <title>Cloning of a new human cDNA similar to Mus musculus uridine kinase mRNA.</title>
        <authorList>
            <person name="Xin Y.R."/>
            <person name="Yu L."/>
            <person name="Zhao S.Y."/>
        </authorList>
    </citation>
    <scope>NUCLEOTIDE SEQUENCE [MRNA] (ISOFORM 1)</scope>
</reference>
<reference key="4">
    <citation type="journal article" date="2004" name="Nat. Genet.">
        <title>Complete sequencing and characterization of 21,243 full-length human cDNAs.</title>
        <authorList>
            <person name="Ota T."/>
            <person name="Suzuki Y."/>
            <person name="Nishikawa T."/>
            <person name="Otsuki T."/>
            <person name="Sugiyama T."/>
            <person name="Irie R."/>
            <person name="Wakamatsu A."/>
            <person name="Hayashi K."/>
            <person name="Sato H."/>
            <person name="Nagai K."/>
            <person name="Kimura K."/>
            <person name="Makita H."/>
            <person name="Sekine M."/>
            <person name="Obayashi M."/>
            <person name="Nishi T."/>
            <person name="Shibahara T."/>
            <person name="Tanaka T."/>
            <person name="Ishii S."/>
            <person name="Yamamoto J."/>
            <person name="Saito K."/>
            <person name="Kawai Y."/>
            <person name="Isono Y."/>
            <person name="Nakamura Y."/>
            <person name="Nagahari K."/>
            <person name="Murakami K."/>
            <person name="Yasuda T."/>
            <person name="Iwayanagi T."/>
            <person name="Wagatsuma M."/>
            <person name="Shiratori A."/>
            <person name="Sudo H."/>
            <person name="Hosoiri T."/>
            <person name="Kaku Y."/>
            <person name="Kodaira H."/>
            <person name="Kondo H."/>
            <person name="Sugawara M."/>
            <person name="Takahashi M."/>
            <person name="Kanda K."/>
            <person name="Yokoi T."/>
            <person name="Furuya T."/>
            <person name="Kikkawa E."/>
            <person name="Omura Y."/>
            <person name="Abe K."/>
            <person name="Kamihara K."/>
            <person name="Katsuta N."/>
            <person name="Sato K."/>
            <person name="Tanikawa M."/>
            <person name="Yamazaki M."/>
            <person name="Ninomiya K."/>
            <person name="Ishibashi T."/>
            <person name="Yamashita H."/>
            <person name="Murakawa K."/>
            <person name="Fujimori K."/>
            <person name="Tanai H."/>
            <person name="Kimata M."/>
            <person name="Watanabe M."/>
            <person name="Hiraoka S."/>
            <person name="Chiba Y."/>
            <person name="Ishida S."/>
            <person name="Ono Y."/>
            <person name="Takiguchi S."/>
            <person name="Watanabe S."/>
            <person name="Yosida M."/>
            <person name="Hotuta T."/>
            <person name="Kusano J."/>
            <person name="Kanehori K."/>
            <person name="Takahashi-Fujii A."/>
            <person name="Hara H."/>
            <person name="Tanase T.-O."/>
            <person name="Nomura Y."/>
            <person name="Togiya S."/>
            <person name="Komai F."/>
            <person name="Hara R."/>
            <person name="Takeuchi K."/>
            <person name="Arita M."/>
            <person name="Imose N."/>
            <person name="Musashino K."/>
            <person name="Yuuki H."/>
            <person name="Oshima A."/>
            <person name="Sasaki N."/>
            <person name="Aotsuka S."/>
            <person name="Yoshikawa Y."/>
            <person name="Matsunawa H."/>
            <person name="Ichihara T."/>
            <person name="Shiohata N."/>
            <person name="Sano S."/>
            <person name="Moriya S."/>
            <person name="Momiyama H."/>
            <person name="Satoh N."/>
            <person name="Takami S."/>
            <person name="Terashima Y."/>
            <person name="Suzuki O."/>
            <person name="Nakagawa S."/>
            <person name="Senoh A."/>
            <person name="Mizoguchi H."/>
            <person name="Goto Y."/>
            <person name="Shimizu F."/>
            <person name="Wakebe H."/>
            <person name="Hishigaki H."/>
            <person name="Watanabe T."/>
            <person name="Sugiyama A."/>
            <person name="Takemoto M."/>
            <person name="Kawakami B."/>
            <person name="Yamazaki M."/>
            <person name="Watanabe K."/>
            <person name="Kumagai A."/>
            <person name="Itakura S."/>
            <person name="Fukuzumi Y."/>
            <person name="Fujimori Y."/>
            <person name="Komiyama M."/>
            <person name="Tashiro H."/>
            <person name="Tanigami A."/>
            <person name="Fujiwara T."/>
            <person name="Ono T."/>
            <person name="Yamada K."/>
            <person name="Fujii Y."/>
            <person name="Ozaki K."/>
            <person name="Hirao M."/>
            <person name="Ohmori Y."/>
            <person name="Kawabata A."/>
            <person name="Hikiji T."/>
            <person name="Kobatake N."/>
            <person name="Inagaki H."/>
            <person name="Ikema Y."/>
            <person name="Okamoto S."/>
            <person name="Okitani R."/>
            <person name="Kawakami T."/>
            <person name="Noguchi S."/>
            <person name="Itoh T."/>
            <person name="Shigeta K."/>
            <person name="Senba T."/>
            <person name="Matsumura K."/>
            <person name="Nakajima Y."/>
            <person name="Mizuno T."/>
            <person name="Morinaga M."/>
            <person name="Sasaki M."/>
            <person name="Togashi T."/>
            <person name="Oyama M."/>
            <person name="Hata H."/>
            <person name="Watanabe M."/>
            <person name="Komatsu T."/>
            <person name="Mizushima-Sugano J."/>
            <person name="Satoh T."/>
            <person name="Shirai Y."/>
            <person name="Takahashi Y."/>
            <person name="Nakagawa K."/>
            <person name="Okumura K."/>
            <person name="Nagase T."/>
            <person name="Nomura N."/>
            <person name="Kikuchi H."/>
            <person name="Masuho Y."/>
            <person name="Yamashita R."/>
            <person name="Nakai K."/>
            <person name="Yada T."/>
            <person name="Nakamura Y."/>
            <person name="Ohara O."/>
            <person name="Isogai T."/>
            <person name="Sugano S."/>
        </authorList>
    </citation>
    <scope>NUCLEOTIDE SEQUENCE [LARGE SCALE MRNA] (ISOFORMS 1 AND 3)</scope>
    <source>
        <tissue>Hippocampus</tissue>
        <tissue>Mammary gland</tissue>
    </source>
</reference>
<reference key="5">
    <citation type="submission" date="2004-06" db="EMBL/GenBank/DDBJ databases">
        <title>Cloning of human full open reading frames in Gateway(TM) system entry vector (pDONR201).</title>
        <authorList>
            <person name="Ebert L."/>
            <person name="Schick M."/>
            <person name="Neubert P."/>
            <person name="Schatten R."/>
            <person name="Henze S."/>
            <person name="Korn B."/>
        </authorList>
    </citation>
    <scope>NUCLEOTIDE SEQUENCE [LARGE SCALE MRNA] (ISOFORM 1)</scope>
</reference>
<reference key="6">
    <citation type="journal article" date="2004" name="Nature">
        <title>DNA sequence and analysis of human chromosome 9.</title>
        <authorList>
            <person name="Humphray S.J."/>
            <person name="Oliver K."/>
            <person name="Hunt A.R."/>
            <person name="Plumb R.W."/>
            <person name="Loveland J.E."/>
            <person name="Howe K.L."/>
            <person name="Andrews T.D."/>
            <person name="Searle S."/>
            <person name="Hunt S.E."/>
            <person name="Scott C.E."/>
            <person name="Jones M.C."/>
            <person name="Ainscough R."/>
            <person name="Almeida J.P."/>
            <person name="Ambrose K.D."/>
            <person name="Ashwell R.I.S."/>
            <person name="Babbage A.K."/>
            <person name="Babbage S."/>
            <person name="Bagguley C.L."/>
            <person name="Bailey J."/>
            <person name="Banerjee R."/>
            <person name="Barker D.J."/>
            <person name="Barlow K.F."/>
            <person name="Bates K."/>
            <person name="Beasley H."/>
            <person name="Beasley O."/>
            <person name="Bird C.P."/>
            <person name="Bray-Allen S."/>
            <person name="Brown A.J."/>
            <person name="Brown J.Y."/>
            <person name="Burford D."/>
            <person name="Burrill W."/>
            <person name="Burton J."/>
            <person name="Carder C."/>
            <person name="Carter N.P."/>
            <person name="Chapman J.C."/>
            <person name="Chen Y."/>
            <person name="Clarke G."/>
            <person name="Clark S.Y."/>
            <person name="Clee C.M."/>
            <person name="Clegg S."/>
            <person name="Collier R.E."/>
            <person name="Corby N."/>
            <person name="Crosier M."/>
            <person name="Cummings A.T."/>
            <person name="Davies J."/>
            <person name="Dhami P."/>
            <person name="Dunn M."/>
            <person name="Dutta I."/>
            <person name="Dyer L.W."/>
            <person name="Earthrowl M.E."/>
            <person name="Faulkner L."/>
            <person name="Fleming C.J."/>
            <person name="Frankish A."/>
            <person name="Frankland J.A."/>
            <person name="French L."/>
            <person name="Fricker D.G."/>
            <person name="Garner P."/>
            <person name="Garnett J."/>
            <person name="Ghori J."/>
            <person name="Gilbert J.G.R."/>
            <person name="Glison C."/>
            <person name="Grafham D.V."/>
            <person name="Gribble S."/>
            <person name="Griffiths C."/>
            <person name="Griffiths-Jones S."/>
            <person name="Grocock R."/>
            <person name="Guy J."/>
            <person name="Hall R.E."/>
            <person name="Hammond S."/>
            <person name="Harley J.L."/>
            <person name="Harrison E.S.I."/>
            <person name="Hart E.A."/>
            <person name="Heath P.D."/>
            <person name="Henderson C.D."/>
            <person name="Hopkins B.L."/>
            <person name="Howard P.J."/>
            <person name="Howden P.J."/>
            <person name="Huckle E."/>
            <person name="Johnson C."/>
            <person name="Johnson D."/>
            <person name="Joy A.A."/>
            <person name="Kay M."/>
            <person name="Keenan S."/>
            <person name="Kershaw J.K."/>
            <person name="Kimberley A.M."/>
            <person name="King A."/>
            <person name="Knights A."/>
            <person name="Laird G.K."/>
            <person name="Langford C."/>
            <person name="Lawlor S."/>
            <person name="Leongamornlert D.A."/>
            <person name="Leversha M."/>
            <person name="Lloyd C."/>
            <person name="Lloyd D.M."/>
            <person name="Lovell J."/>
            <person name="Martin S."/>
            <person name="Mashreghi-Mohammadi M."/>
            <person name="Matthews L."/>
            <person name="McLaren S."/>
            <person name="McLay K.E."/>
            <person name="McMurray A."/>
            <person name="Milne S."/>
            <person name="Nickerson T."/>
            <person name="Nisbett J."/>
            <person name="Nordsiek G."/>
            <person name="Pearce A.V."/>
            <person name="Peck A.I."/>
            <person name="Porter K.M."/>
            <person name="Pandian R."/>
            <person name="Pelan S."/>
            <person name="Phillimore B."/>
            <person name="Povey S."/>
            <person name="Ramsey Y."/>
            <person name="Rand V."/>
            <person name="Scharfe M."/>
            <person name="Sehra H.K."/>
            <person name="Shownkeen R."/>
            <person name="Sims S.K."/>
            <person name="Skuce C.D."/>
            <person name="Smith M."/>
            <person name="Steward C.A."/>
            <person name="Swarbreck D."/>
            <person name="Sycamore N."/>
            <person name="Tester J."/>
            <person name="Thorpe A."/>
            <person name="Tracey A."/>
            <person name="Tromans A."/>
            <person name="Thomas D.W."/>
            <person name="Wall M."/>
            <person name="Wallis J.M."/>
            <person name="West A.P."/>
            <person name="Whitehead S.L."/>
            <person name="Willey D.L."/>
            <person name="Williams S.A."/>
            <person name="Wilming L."/>
            <person name="Wray P.W."/>
            <person name="Young L."/>
            <person name="Ashurst J.L."/>
            <person name="Coulson A."/>
            <person name="Blocker H."/>
            <person name="Durbin R.M."/>
            <person name="Sulston J.E."/>
            <person name="Hubbard T."/>
            <person name="Jackson M.J."/>
            <person name="Bentley D.R."/>
            <person name="Beck S."/>
            <person name="Rogers J."/>
            <person name="Dunham I."/>
        </authorList>
    </citation>
    <scope>NUCLEOTIDE SEQUENCE [LARGE SCALE GENOMIC DNA]</scope>
</reference>
<reference key="7">
    <citation type="submission" date="2005-07" db="EMBL/GenBank/DDBJ databases">
        <authorList>
            <person name="Mural R.J."/>
            <person name="Istrail S."/>
            <person name="Sutton G.G."/>
            <person name="Florea L."/>
            <person name="Halpern A.L."/>
            <person name="Mobarry C.M."/>
            <person name="Lippert R."/>
            <person name="Walenz B."/>
            <person name="Shatkay H."/>
            <person name="Dew I."/>
            <person name="Miller J.R."/>
            <person name="Flanigan M.J."/>
            <person name="Edwards N.J."/>
            <person name="Bolanos R."/>
            <person name="Fasulo D."/>
            <person name="Halldorsson B.V."/>
            <person name="Hannenhalli S."/>
            <person name="Turner R."/>
            <person name="Yooseph S."/>
            <person name="Lu F."/>
            <person name="Nusskern D.R."/>
            <person name="Shue B.C."/>
            <person name="Zheng X.H."/>
            <person name="Zhong F."/>
            <person name="Delcher A.L."/>
            <person name="Huson D.H."/>
            <person name="Kravitz S.A."/>
            <person name="Mouchard L."/>
            <person name="Reinert K."/>
            <person name="Remington K.A."/>
            <person name="Clark A.G."/>
            <person name="Waterman M.S."/>
            <person name="Eichler E.E."/>
            <person name="Adams M.D."/>
            <person name="Hunkapiller M.W."/>
            <person name="Myers E.W."/>
            <person name="Venter J.C."/>
        </authorList>
    </citation>
    <scope>NUCLEOTIDE SEQUENCE [LARGE SCALE GENOMIC DNA]</scope>
</reference>
<reference key="8">
    <citation type="journal article" date="2004" name="Genome Res.">
        <title>The status, quality, and expansion of the NIH full-length cDNA project: the Mammalian Gene Collection (MGC).</title>
        <authorList>
            <consortium name="The MGC Project Team"/>
        </authorList>
    </citation>
    <scope>NUCLEOTIDE SEQUENCE [LARGE SCALE MRNA] (ISOFORMS 1 AND 2)</scope>
    <source>
        <tissue>Brain</tissue>
        <tissue>Colon</tissue>
    </source>
</reference>
<reference key="9">
    <citation type="journal article" date="2008" name="Proc. Natl. Acad. Sci. U.S.A.">
        <title>A quantitative atlas of mitotic phosphorylation.</title>
        <authorList>
            <person name="Dephoure N."/>
            <person name="Zhou C."/>
            <person name="Villen J."/>
            <person name="Beausoleil S.A."/>
            <person name="Bakalarski C.E."/>
            <person name="Elledge S.J."/>
            <person name="Gygi S.P."/>
        </authorList>
    </citation>
    <scope>IDENTIFICATION BY MASS SPECTROMETRY [LARGE SCALE ANALYSIS]</scope>
    <source>
        <tissue>Cervix carcinoma</tissue>
    </source>
</reference>
<reference key="10">
    <citation type="journal article" date="2013" name="J. Proteome Res.">
        <title>Toward a comprehensive characterization of a human cancer cell phosphoproteome.</title>
        <authorList>
            <person name="Zhou H."/>
            <person name="Di Palma S."/>
            <person name="Preisinger C."/>
            <person name="Peng M."/>
            <person name="Polat A.N."/>
            <person name="Heck A.J."/>
            <person name="Mohammed S."/>
        </authorList>
    </citation>
    <scope>PHOSPHORYLATION [LARGE SCALE ANALYSIS] AT THR-251 AND SER-253</scope>
    <scope>IDENTIFICATION BY MASS SPECTROMETRY [LARGE SCALE ANALYSIS]</scope>
    <source>
        <tissue>Cervix carcinoma</tissue>
        <tissue>Erythroleukemia</tissue>
    </source>
</reference>
<reference key="11">
    <citation type="journal article" date="2014" name="J. Proteomics">
        <title>An enzyme assisted RP-RPLC approach for in-depth analysis of human liver phosphoproteome.</title>
        <authorList>
            <person name="Bian Y."/>
            <person name="Song C."/>
            <person name="Cheng K."/>
            <person name="Dong M."/>
            <person name="Wang F."/>
            <person name="Huang J."/>
            <person name="Sun D."/>
            <person name="Wang L."/>
            <person name="Ye M."/>
            <person name="Zou H."/>
        </authorList>
    </citation>
    <scope>PHOSPHORYLATION [LARGE SCALE ANALYSIS] AT SER-253</scope>
    <scope>IDENTIFICATION BY MASS SPECTROMETRY [LARGE SCALE ANALYSIS]</scope>
    <source>
        <tissue>Liver</tissue>
    </source>
</reference>
<reference key="12">
    <citation type="submission" date="2007-01" db="PDB data bank">
        <title>Structure of human uridine-cytidine kinase 1.</title>
        <authorList>
            <consortium name="Northeast structural genomics consortium (NESG)"/>
        </authorList>
    </citation>
    <scope>X-RAY CRYSTALLOGRAPHY (2.5 ANGSTROMS) OF 22-243 IN COMPLEX WITH ADP</scope>
</reference>
<dbReference type="EC" id="2.7.1.48" evidence="4"/>
<dbReference type="EMBL" id="AF237290">
    <property type="protein sequence ID" value="AAK28324.1"/>
    <property type="molecule type" value="mRNA"/>
</dbReference>
<dbReference type="EMBL" id="AF254133">
    <property type="protein sequence ID" value="AAK49122.1"/>
    <property type="molecule type" value="mRNA"/>
</dbReference>
<dbReference type="EMBL" id="AF125106">
    <property type="protein sequence ID" value="AAL75943.1"/>
    <property type="molecule type" value="mRNA"/>
</dbReference>
<dbReference type="EMBL" id="AK022317">
    <property type="protein sequence ID" value="BAB14010.1"/>
    <property type="molecule type" value="mRNA"/>
</dbReference>
<dbReference type="EMBL" id="AK295471">
    <property type="protein sequence ID" value="BAG58400.1"/>
    <property type="molecule type" value="mRNA"/>
</dbReference>
<dbReference type="EMBL" id="CR457281">
    <property type="protein sequence ID" value="CAG33562.1"/>
    <property type="molecule type" value="mRNA"/>
</dbReference>
<dbReference type="EMBL" id="AL358781">
    <property type="status" value="NOT_ANNOTATED_CDS"/>
    <property type="molecule type" value="Genomic_DNA"/>
</dbReference>
<dbReference type="EMBL" id="CH471090">
    <property type="protein sequence ID" value="EAW87983.1"/>
    <property type="molecule type" value="Genomic_DNA"/>
</dbReference>
<dbReference type="EMBL" id="BC015547">
    <property type="protein sequence ID" value="AAH15547.1"/>
    <property type="molecule type" value="mRNA"/>
</dbReference>
<dbReference type="EMBL" id="BC091495">
    <property type="protein sequence ID" value="AAH91495.1"/>
    <property type="molecule type" value="mRNA"/>
</dbReference>
<dbReference type="CCDS" id="CCDS48046.1">
    <molecule id="Q9HA47-2"/>
</dbReference>
<dbReference type="CCDS" id="CCDS59151.1">
    <molecule id="Q9HA47-3"/>
</dbReference>
<dbReference type="CCDS" id="CCDS59152.1">
    <molecule id="Q9HA47-4"/>
</dbReference>
<dbReference type="CCDS" id="CCDS6944.1">
    <molecule id="Q9HA47-1"/>
</dbReference>
<dbReference type="RefSeq" id="NP_001129426.1">
    <molecule id="Q9HA47-2"/>
    <property type="nucleotide sequence ID" value="NM_001135954.3"/>
</dbReference>
<dbReference type="RefSeq" id="NP_001248379.1">
    <molecule id="Q9HA47-3"/>
    <property type="nucleotide sequence ID" value="NM_001261450.3"/>
</dbReference>
<dbReference type="RefSeq" id="NP_001248380.1">
    <molecule id="Q9HA47-4"/>
    <property type="nucleotide sequence ID" value="NM_001261451.3"/>
</dbReference>
<dbReference type="RefSeq" id="NP_001305448.1">
    <property type="nucleotide sequence ID" value="NM_001318519.1"/>
</dbReference>
<dbReference type="RefSeq" id="NP_113620.1">
    <molecule id="Q9HA47-1"/>
    <property type="nucleotide sequence ID" value="NM_031432.5"/>
</dbReference>
<dbReference type="PDB" id="2JEO">
    <property type="method" value="X-ray"/>
    <property type="resolution" value="2.50 A"/>
    <property type="chains" value="A=22-243"/>
</dbReference>
<dbReference type="PDB" id="2UVQ">
    <property type="method" value="X-ray"/>
    <property type="resolution" value="3.00 A"/>
    <property type="chains" value="A=22-243"/>
</dbReference>
<dbReference type="PDBsum" id="2JEO"/>
<dbReference type="PDBsum" id="2UVQ"/>
<dbReference type="SMR" id="Q9HA47"/>
<dbReference type="BioGRID" id="123681">
    <property type="interactions" value="20"/>
</dbReference>
<dbReference type="FunCoup" id="Q9HA47">
    <property type="interactions" value="960"/>
</dbReference>
<dbReference type="IntAct" id="Q9HA47">
    <property type="interactions" value="11"/>
</dbReference>
<dbReference type="STRING" id="9606.ENSP00000361285"/>
<dbReference type="ChEMBL" id="CHEMBL5682"/>
<dbReference type="DrugCentral" id="Q9HA47"/>
<dbReference type="GlyGen" id="Q9HA47">
    <property type="glycosylation" value="1 site, 1 O-linked glycan (1 site)"/>
</dbReference>
<dbReference type="iPTMnet" id="Q9HA47"/>
<dbReference type="MetOSite" id="Q9HA47"/>
<dbReference type="PhosphoSitePlus" id="Q9HA47"/>
<dbReference type="BioMuta" id="UCK1"/>
<dbReference type="DMDM" id="20455360"/>
<dbReference type="jPOST" id="Q9HA47"/>
<dbReference type="MassIVE" id="Q9HA47"/>
<dbReference type="PaxDb" id="9606-ENSP00000361285"/>
<dbReference type="PeptideAtlas" id="Q9HA47"/>
<dbReference type="ProteomicsDB" id="63191"/>
<dbReference type="ProteomicsDB" id="63192"/>
<dbReference type="ProteomicsDB" id="81375">
    <molecule id="Q9HA47-1"/>
</dbReference>
<dbReference type="ProteomicsDB" id="81376">
    <molecule id="Q9HA47-2"/>
</dbReference>
<dbReference type="Pumba" id="Q9HA47"/>
<dbReference type="Antibodypedia" id="31627">
    <property type="antibodies" value="339 antibodies from 22 providers"/>
</dbReference>
<dbReference type="DNASU" id="83549"/>
<dbReference type="Ensembl" id="ENST00000372208.7">
    <molecule id="Q9HA47-2"/>
    <property type="protein sequence ID" value="ENSP00000361282.3"/>
    <property type="gene ID" value="ENSG00000130717.13"/>
</dbReference>
<dbReference type="Ensembl" id="ENST00000372210.7">
    <molecule id="Q9HA47-3"/>
    <property type="protein sequence ID" value="ENSP00000361284.3"/>
    <property type="gene ID" value="ENSG00000130717.13"/>
</dbReference>
<dbReference type="Ensembl" id="ENST00000372211.7">
    <molecule id="Q9HA47-4"/>
    <property type="protein sequence ID" value="ENSP00000361285.3"/>
    <property type="gene ID" value="ENSG00000130717.13"/>
</dbReference>
<dbReference type="Ensembl" id="ENST00000372215.5">
    <molecule id="Q9HA47-1"/>
    <property type="protein sequence ID" value="ENSP00000361289.4"/>
    <property type="gene ID" value="ENSG00000130717.13"/>
</dbReference>
<dbReference type="GeneID" id="83549"/>
<dbReference type="KEGG" id="hsa:83549"/>
<dbReference type="MANE-Select" id="ENST00000372215.5">
    <property type="protein sequence ID" value="ENSP00000361289.4"/>
    <property type="RefSeq nucleotide sequence ID" value="NM_031432.5"/>
    <property type="RefSeq protein sequence ID" value="NP_113620.1"/>
</dbReference>
<dbReference type="UCSC" id="uc004cay.4">
    <molecule id="Q9HA47-1"/>
    <property type="organism name" value="human"/>
</dbReference>
<dbReference type="AGR" id="HGNC:14859"/>
<dbReference type="CTD" id="83549"/>
<dbReference type="DisGeNET" id="83549"/>
<dbReference type="GeneCards" id="UCK1"/>
<dbReference type="HGNC" id="HGNC:14859">
    <property type="gene designation" value="UCK1"/>
</dbReference>
<dbReference type="HPA" id="ENSG00000130717">
    <property type="expression patterns" value="Low tissue specificity"/>
</dbReference>
<dbReference type="MIM" id="609328">
    <property type="type" value="gene"/>
</dbReference>
<dbReference type="neXtProt" id="NX_Q9HA47"/>
<dbReference type="OpenTargets" id="ENSG00000130717"/>
<dbReference type="PharmGKB" id="PA134861770"/>
<dbReference type="VEuPathDB" id="HostDB:ENSG00000130717"/>
<dbReference type="eggNOG" id="KOG4203">
    <property type="taxonomic scope" value="Eukaryota"/>
</dbReference>
<dbReference type="GeneTree" id="ENSGT01020000230412"/>
<dbReference type="HOGENOM" id="CLU_021278_1_4_1"/>
<dbReference type="InParanoid" id="Q9HA47"/>
<dbReference type="OMA" id="PQSTVCE"/>
<dbReference type="OrthoDB" id="10257085at2759"/>
<dbReference type="PAN-GO" id="Q9HA47">
    <property type="GO annotations" value="2 GO annotations based on evolutionary models"/>
</dbReference>
<dbReference type="PhylomeDB" id="Q9HA47"/>
<dbReference type="TreeFam" id="TF316686"/>
<dbReference type="BioCyc" id="MetaCyc:HS05429-MONOMER"/>
<dbReference type="BRENDA" id="2.7.1.48">
    <property type="organism ID" value="2681"/>
</dbReference>
<dbReference type="PathwayCommons" id="Q9HA47"/>
<dbReference type="Reactome" id="R-HSA-73614">
    <property type="pathway name" value="Pyrimidine salvage"/>
</dbReference>
<dbReference type="SABIO-RK" id="Q9HA47"/>
<dbReference type="SignaLink" id="Q9HA47"/>
<dbReference type="SIGNOR" id="Q9HA47"/>
<dbReference type="UniPathway" id="UPA00574">
    <property type="reaction ID" value="UER00637"/>
</dbReference>
<dbReference type="UniPathway" id="UPA00579">
    <property type="reaction ID" value="UER00640"/>
</dbReference>
<dbReference type="BioGRID-ORCS" id="83549">
    <property type="hits" value="16 hits in 1158 CRISPR screens"/>
</dbReference>
<dbReference type="ChiTaRS" id="UCK1">
    <property type="organism name" value="human"/>
</dbReference>
<dbReference type="EvolutionaryTrace" id="Q9HA47"/>
<dbReference type="GenomeRNAi" id="83549"/>
<dbReference type="Pharos" id="Q9HA47">
    <property type="development level" value="Tbio"/>
</dbReference>
<dbReference type="PRO" id="PR:Q9HA47"/>
<dbReference type="Proteomes" id="UP000005640">
    <property type="component" value="Chromosome 9"/>
</dbReference>
<dbReference type="RNAct" id="Q9HA47">
    <property type="molecule type" value="protein"/>
</dbReference>
<dbReference type="Bgee" id="ENSG00000130717">
    <property type="expression patterns" value="Expressed in pancreatic ductal cell and 170 other cell types or tissues"/>
</dbReference>
<dbReference type="ExpressionAtlas" id="Q9HA47">
    <property type="expression patterns" value="baseline and differential"/>
</dbReference>
<dbReference type="GO" id="GO:0005737">
    <property type="term" value="C:cytoplasm"/>
    <property type="evidence" value="ECO:0000318"/>
    <property type="project" value="GO_Central"/>
</dbReference>
<dbReference type="GO" id="GO:0005829">
    <property type="term" value="C:cytosol"/>
    <property type="evidence" value="ECO:0000304"/>
    <property type="project" value="Reactome"/>
</dbReference>
<dbReference type="GO" id="GO:0005524">
    <property type="term" value="F:ATP binding"/>
    <property type="evidence" value="ECO:0007669"/>
    <property type="project" value="UniProtKB-KW"/>
</dbReference>
<dbReference type="GO" id="GO:0043771">
    <property type="term" value="F:cytidine kinase activity"/>
    <property type="evidence" value="ECO:0000314"/>
    <property type="project" value="UniProtKB"/>
</dbReference>
<dbReference type="GO" id="GO:0004849">
    <property type="term" value="F:uridine kinase activity"/>
    <property type="evidence" value="ECO:0000314"/>
    <property type="project" value="UniProtKB"/>
</dbReference>
<dbReference type="GO" id="GO:0044211">
    <property type="term" value="P:CTP salvage"/>
    <property type="evidence" value="ECO:0000314"/>
    <property type="project" value="UniProtKB"/>
</dbReference>
<dbReference type="GO" id="GO:0044206">
    <property type="term" value="P:UMP salvage"/>
    <property type="evidence" value="ECO:0000314"/>
    <property type="project" value="UniProtKB"/>
</dbReference>
<dbReference type="CDD" id="cd02023">
    <property type="entry name" value="UMPK"/>
    <property type="match status" value="1"/>
</dbReference>
<dbReference type="FunFam" id="3.40.50.300:FF:000297">
    <property type="entry name" value="Uridine-cytidine kinase 2"/>
    <property type="match status" value="1"/>
</dbReference>
<dbReference type="Gene3D" id="3.40.50.300">
    <property type="entry name" value="P-loop containing nucleotide triphosphate hydrolases"/>
    <property type="match status" value="1"/>
</dbReference>
<dbReference type="InterPro" id="IPR027417">
    <property type="entry name" value="P-loop_NTPase"/>
</dbReference>
<dbReference type="InterPro" id="IPR006083">
    <property type="entry name" value="PRK/URK"/>
</dbReference>
<dbReference type="InterPro" id="IPR000764">
    <property type="entry name" value="Uridine_kinase-like"/>
</dbReference>
<dbReference type="NCBIfam" id="NF004018">
    <property type="entry name" value="PRK05480.1"/>
    <property type="match status" value="1"/>
</dbReference>
<dbReference type="NCBIfam" id="TIGR00235">
    <property type="entry name" value="udk"/>
    <property type="match status" value="1"/>
</dbReference>
<dbReference type="PANTHER" id="PTHR10285">
    <property type="entry name" value="URIDINE KINASE"/>
    <property type="match status" value="1"/>
</dbReference>
<dbReference type="Pfam" id="PF00485">
    <property type="entry name" value="PRK"/>
    <property type="match status" value="1"/>
</dbReference>
<dbReference type="PRINTS" id="PR00988">
    <property type="entry name" value="URIDINKINASE"/>
</dbReference>
<dbReference type="SUPFAM" id="SSF52540">
    <property type="entry name" value="P-loop containing nucleoside triphosphate hydrolases"/>
    <property type="match status" value="1"/>
</dbReference>
<accession>Q9HA47</accession>
<accession>Q5JT09</accession>
<accession>Q5JT10</accession>
<accession>Q5JT12</accession>
<accession>Q5JT13</accession>
<accession>Q6IA74</accession>
<accession>Q96BJ0</accession>
<feature type="chain" id="PRO_0000164453" description="Uridine-cytidine kinase 1">
    <location>
        <begin position="1"/>
        <end position="277"/>
    </location>
</feature>
<feature type="region of interest" description="Disordered" evidence="3">
    <location>
        <begin position="1"/>
        <end position="30"/>
    </location>
</feature>
<feature type="region of interest" description="Disordered" evidence="3">
    <location>
        <begin position="247"/>
        <end position="277"/>
    </location>
</feature>
<feature type="compositionally biased region" description="Basic and acidic residues" evidence="3">
    <location>
        <begin position="268"/>
        <end position="277"/>
    </location>
</feature>
<feature type="active site" evidence="1">
    <location>
        <position position="65"/>
    </location>
</feature>
<feature type="binding site" evidence="5">
    <location>
        <begin position="30"/>
        <end position="38"/>
    </location>
    <ligand>
        <name>ATP</name>
        <dbReference type="ChEBI" id="CHEBI:30616"/>
    </ligand>
</feature>
<feature type="binding site" evidence="2">
    <location>
        <position position="87"/>
    </location>
    <ligand>
        <name>substrate</name>
    </ligand>
</feature>
<feature type="binding site" evidence="2">
    <location>
        <position position="115"/>
    </location>
    <ligand>
        <name>substrate</name>
    </ligand>
</feature>
<feature type="binding site" evidence="2">
    <location>
        <position position="120"/>
    </location>
    <ligand>
        <name>substrate</name>
    </ligand>
</feature>
<feature type="binding site" evidence="2">
    <location>
        <position position="169"/>
    </location>
    <ligand>
        <name>substrate</name>
    </ligand>
</feature>
<feature type="binding site" evidence="2">
    <location>
        <position position="178"/>
    </location>
    <ligand>
        <name>substrate</name>
    </ligand>
</feature>
<feature type="binding site" evidence="2">
    <location>
        <position position="186"/>
    </location>
    <ligand>
        <name>substrate</name>
    </ligand>
</feature>
<feature type="binding site" evidence="5">
    <location>
        <position position="215"/>
    </location>
    <ligand>
        <name>ATP</name>
        <dbReference type="ChEBI" id="CHEBI:30616"/>
    </ligand>
</feature>
<feature type="modified residue" description="Phosphothreonine" evidence="9">
    <location>
        <position position="251"/>
    </location>
</feature>
<feature type="modified residue" description="Phosphoserine" evidence="9 10">
    <location>
        <position position="253"/>
    </location>
</feature>
<feature type="splice variant" id="VSP_045174" description="In isoform 3." evidence="6">
    <location>
        <begin position="28"/>
        <end position="36"/>
    </location>
</feature>
<feature type="splice variant" id="VSP_056748" description="In isoform 4." evidence="8">
    <original>VSGGTASGK</original>
    <variation>DERFQAGIPLLCLQ</variation>
    <location>
        <begin position="28"/>
        <end position="36"/>
    </location>
</feature>
<feature type="splice variant" id="VSP_041269" description="In isoform 2." evidence="7">
    <original>VLRDVRRGRDLEQILTQYTTFVKPAFEEFCLPTKKYADVIIPRGVDNMVAINLIVQHIQDILNGDICKWHRGGSNGRSYKRTFSEPGDHPGMLTSGKRSHLESSSRPH</original>
    <variation>DKEVCRCDHPARSGQYGCHQPDRAAHPGHSEW</variation>
    <location>
        <begin position="170"/>
        <end position="277"/>
    </location>
</feature>
<feature type="sequence conflict" description="In Ref. 3; AAL75943." evidence="8" ref="3">
    <original>DCESPAPEAD</original>
    <variation>GARARAGAN</variation>
    <location>
        <begin position="8"/>
        <end position="17"/>
    </location>
</feature>
<feature type="sequence conflict" description="In Ref. 3; AAL75943." evidence="8" ref="3">
    <original>QR</original>
    <variation>HG</variation>
    <location>
        <begin position="56"/>
        <end position="57"/>
    </location>
</feature>
<feature type="sequence conflict" description="In Ref. 5; CAG33562." evidence="8" ref="5">
    <original>R</original>
    <variation>H</variation>
    <location>
        <position position="175"/>
    </location>
</feature>
<feature type="sequence conflict" description="In Ref. 3; AAL75943." evidence="8" ref="3">
    <original>S</original>
    <variation>T</variation>
    <location>
        <position position="247"/>
    </location>
</feature>
<feature type="strand" evidence="11">
    <location>
        <begin position="23"/>
        <end position="29"/>
    </location>
</feature>
<feature type="helix" evidence="11">
    <location>
        <begin position="36"/>
        <end position="46"/>
    </location>
</feature>
<feature type="helix" evidence="11">
    <location>
        <begin position="49"/>
        <end position="51"/>
    </location>
</feature>
<feature type="helix" evidence="11">
    <location>
        <begin position="54"/>
        <end position="56"/>
    </location>
</feature>
<feature type="strand" evidence="11">
    <location>
        <begin position="58"/>
        <end position="63"/>
    </location>
</feature>
<feature type="helix" evidence="11">
    <location>
        <begin position="64"/>
        <end position="67"/>
    </location>
</feature>
<feature type="helix" evidence="11">
    <location>
        <begin position="73"/>
        <end position="80"/>
    </location>
</feature>
<feature type="helix" evidence="11">
    <location>
        <begin position="89"/>
        <end position="91"/>
    </location>
</feature>
<feature type="helix" evidence="11">
    <location>
        <begin position="94"/>
        <end position="105"/>
    </location>
</feature>
<feature type="strand" evidence="11">
    <location>
        <begin position="110"/>
        <end position="112"/>
    </location>
</feature>
<feature type="turn" evidence="11">
    <location>
        <begin position="117"/>
        <end position="120"/>
    </location>
</feature>
<feature type="strand" evidence="11">
    <location>
        <begin position="127"/>
        <end position="129"/>
    </location>
</feature>
<feature type="strand" evidence="11">
    <location>
        <begin position="133"/>
        <end position="138"/>
    </location>
</feature>
<feature type="turn" evidence="11">
    <location>
        <begin position="140"/>
        <end position="143"/>
    </location>
</feature>
<feature type="helix" evidence="11">
    <location>
        <begin position="146"/>
        <end position="149"/>
    </location>
</feature>
<feature type="strand" evidence="11">
    <location>
        <begin position="153"/>
        <end position="159"/>
    </location>
</feature>
<feature type="helix" evidence="11">
    <location>
        <begin position="162"/>
        <end position="173"/>
    </location>
</feature>
<feature type="helix" evidence="11">
    <location>
        <begin position="180"/>
        <end position="189"/>
    </location>
</feature>
<feature type="helix" evidence="11">
    <location>
        <begin position="191"/>
        <end position="198"/>
    </location>
</feature>
<feature type="helix" evidence="11">
    <location>
        <begin position="200"/>
        <end position="205"/>
    </location>
</feature>
<feature type="strand" evidence="11">
    <location>
        <begin position="207"/>
        <end position="213"/>
    </location>
</feature>
<feature type="helix" evidence="11">
    <location>
        <begin position="217"/>
        <end position="232"/>
    </location>
</feature>
<feature type="sequence conflict" description="In Ref. 8; AAH15547." evidence="8" ref="8">
    <original>A</original>
    <variation>T</variation>
    <location sequence="Q9HA47-2">
        <position position="180"/>
    </location>
</feature>
<comment type="function">
    <text evidence="4">Phosphorylates uridine and cytidine to uridine monophosphate and cytidine monophosphate (PubMed:11306702). Does not phosphorylate deoxyribonucleosides or purine ribonucleosides (PubMed:11306702). Can use ATP or GTP as a phosphate donor (PubMed:11306702). Can also phosphorylate cytidine and uridine nucleoside analogs such as 6-azauridine, 5-fluorouridine, 4-thiouridine, 5-bromouridine, N(4)-acetylcytidine, N(4)-benzoylcytidine, 5-fluorocytidine, 2-thiocytidine, 5-methylcytidine, and N(4)-anisoylcytidine (PubMed:11306702).</text>
</comment>
<comment type="catalytic activity">
    <reaction evidence="4">
        <text>uridine + ATP = UMP + ADP + H(+)</text>
        <dbReference type="Rhea" id="RHEA:16825"/>
        <dbReference type="ChEBI" id="CHEBI:15378"/>
        <dbReference type="ChEBI" id="CHEBI:16704"/>
        <dbReference type="ChEBI" id="CHEBI:30616"/>
        <dbReference type="ChEBI" id="CHEBI:57865"/>
        <dbReference type="ChEBI" id="CHEBI:456216"/>
        <dbReference type="EC" id="2.7.1.48"/>
    </reaction>
</comment>
<comment type="catalytic activity">
    <reaction evidence="4">
        <text>cytidine + ATP = CMP + ADP + H(+)</text>
        <dbReference type="Rhea" id="RHEA:24674"/>
        <dbReference type="ChEBI" id="CHEBI:15378"/>
        <dbReference type="ChEBI" id="CHEBI:17562"/>
        <dbReference type="ChEBI" id="CHEBI:30616"/>
        <dbReference type="ChEBI" id="CHEBI:60377"/>
        <dbReference type="ChEBI" id="CHEBI:456216"/>
        <dbReference type="EC" id="2.7.1.48"/>
    </reaction>
</comment>
<comment type="pathway">
    <text evidence="4">Pyrimidine metabolism; CTP biosynthesis via salvage pathway; CTP from cytidine: step 1/3.</text>
</comment>
<comment type="pathway">
    <text evidence="4">Pyrimidine metabolism; UMP biosynthesis via salvage pathway; UMP from uridine: step 1/1.</text>
</comment>
<comment type="interaction">
    <interactant intactId="EBI-16434682">
        <id>Q9HA47-2</id>
    </interactant>
    <interactant intactId="EBI-348399">
        <id>P22607</id>
        <label>FGFR3</label>
    </interactant>
    <organismsDiffer>false</organismsDiffer>
    <experiments>3</experiments>
</comment>
<comment type="interaction">
    <interactant intactId="EBI-16434682">
        <id>Q9HA47-2</id>
    </interactant>
    <interactant intactId="EBI-351506">
        <id>P06396</id>
        <label>GSN</label>
    </interactant>
    <organismsDiffer>false</organismsDiffer>
    <experiments>3</experiments>
</comment>
<comment type="interaction">
    <interactant intactId="EBI-16434682">
        <id>Q9HA47-2</id>
    </interactant>
    <interactant intactId="EBI-16434671">
        <id>A0A0S2Z5Y6</id>
        <label>UCK1</label>
    </interactant>
    <organismsDiffer>false</organismsDiffer>
    <experiments>3</experiments>
</comment>
<comment type="alternative products">
    <event type="alternative splicing"/>
    <isoform>
        <id>Q9HA47-1</id>
        <name>1</name>
        <sequence type="displayed"/>
    </isoform>
    <isoform>
        <id>Q9HA47-2</id>
        <name>2</name>
        <sequence type="described" ref="VSP_041269"/>
    </isoform>
    <isoform>
        <id>Q9HA47-3</id>
        <name>3</name>
        <sequence type="described" ref="VSP_045174"/>
    </isoform>
    <isoform>
        <id>Q9HA47-4</id>
        <name>4</name>
        <sequence type="described" ref="VSP_056748"/>
    </isoform>
</comment>
<comment type="tissue specificity">
    <text evidence="4">Ubiquitous.</text>
</comment>
<comment type="similarity">
    <text evidence="8">Belongs to the uridine kinase family.</text>
</comment>